<protein>
    <recommendedName>
        <fullName evidence="1">Large ribosomal subunit protein bL36</fullName>
    </recommendedName>
    <alternativeName>
        <fullName evidence="2">50S ribosomal protein L36</fullName>
    </alternativeName>
</protein>
<sequence length="37" mass="4305">MKVRPSVKPICEKCKVIRRKGKVMVICENPKHKQKQG</sequence>
<feature type="chain" id="PRO_1000196178" description="Large ribosomal subunit protein bL36">
    <location>
        <begin position="1"/>
        <end position="37"/>
    </location>
</feature>
<organism>
    <name type="scientific">Clostridium botulinum (strain Kyoto / Type A2)</name>
    <dbReference type="NCBI Taxonomy" id="536232"/>
    <lineage>
        <taxon>Bacteria</taxon>
        <taxon>Bacillati</taxon>
        <taxon>Bacillota</taxon>
        <taxon>Clostridia</taxon>
        <taxon>Eubacteriales</taxon>
        <taxon>Clostridiaceae</taxon>
        <taxon>Clostridium</taxon>
    </lineage>
</organism>
<evidence type="ECO:0000255" key="1">
    <source>
        <dbReference type="HAMAP-Rule" id="MF_00251"/>
    </source>
</evidence>
<evidence type="ECO:0000305" key="2"/>
<keyword id="KW-0687">Ribonucleoprotein</keyword>
<keyword id="KW-0689">Ribosomal protein</keyword>
<accession>C1FMS6</accession>
<comment type="similarity">
    <text evidence="1">Belongs to the bacterial ribosomal protein bL36 family.</text>
</comment>
<gene>
    <name evidence="1" type="primary">rpmJ</name>
    <name type="ordered locus">CLM_3923</name>
</gene>
<proteinExistence type="inferred from homology"/>
<name>RL36_CLOBJ</name>
<reference key="1">
    <citation type="submission" date="2008-10" db="EMBL/GenBank/DDBJ databases">
        <title>Genome sequence of Clostridium botulinum A2 Kyoto.</title>
        <authorList>
            <person name="Shrivastava S."/>
            <person name="Brinkac L.M."/>
            <person name="Brown J.L."/>
            <person name="Bruce D."/>
            <person name="Detter C.C."/>
            <person name="Johnson E.A."/>
            <person name="Munk C.A."/>
            <person name="Smith L.A."/>
            <person name="Smith T.J."/>
            <person name="Sutton G."/>
            <person name="Brettin T.S."/>
        </authorList>
    </citation>
    <scope>NUCLEOTIDE SEQUENCE [LARGE SCALE GENOMIC DNA]</scope>
    <source>
        <strain>Kyoto / Type A2</strain>
    </source>
</reference>
<dbReference type="EMBL" id="CP001581">
    <property type="protein sequence ID" value="ACO86989.1"/>
    <property type="molecule type" value="Genomic_DNA"/>
</dbReference>
<dbReference type="RefSeq" id="WP_003156543.1">
    <property type="nucleotide sequence ID" value="NC_012563.1"/>
</dbReference>
<dbReference type="SMR" id="C1FMS6"/>
<dbReference type="GeneID" id="97412846"/>
<dbReference type="KEGG" id="cby:CLM_3923"/>
<dbReference type="eggNOG" id="COG0257">
    <property type="taxonomic scope" value="Bacteria"/>
</dbReference>
<dbReference type="HOGENOM" id="CLU_135723_6_2_9"/>
<dbReference type="Proteomes" id="UP000001374">
    <property type="component" value="Chromosome"/>
</dbReference>
<dbReference type="GO" id="GO:0005737">
    <property type="term" value="C:cytoplasm"/>
    <property type="evidence" value="ECO:0007669"/>
    <property type="project" value="UniProtKB-ARBA"/>
</dbReference>
<dbReference type="GO" id="GO:1990904">
    <property type="term" value="C:ribonucleoprotein complex"/>
    <property type="evidence" value="ECO:0007669"/>
    <property type="project" value="UniProtKB-KW"/>
</dbReference>
<dbReference type="GO" id="GO:0005840">
    <property type="term" value="C:ribosome"/>
    <property type="evidence" value="ECO:0007669"/>
    <property type="project" value="UniProtKB-KW"/>
</dbReference>
<dbReference type="GO" id="GO:0003735">
    <property type="term" value="F:structural constituent of ribosome"/>
    <property type="evidence" value="ECO:0007669"/>
    <property type="project" value="InterPro"/>
</dbReference>
<dbReference type="GO" id="GO:0006412">
    <property type="term" value="P:translation"/>
    <property type="evidence" value="ECO:0007669"/>
    <property type="project" value="UniProtKB-UniRule"/>
</dbReference>
<dbReference type="HAMAP" id="MF_00251">
    <property type="entry name" value="Ribosomal_bL36"/>
    <property type="match status" value="1"/>
</dbReference>
<dbReference type="InterPro" id="IPR000473">
    <property type="entry name" value="Ribosomal_bL36"/>
</dbReference>
<dbReference type="InterPro" id="IPR035977">
    <property type="entry name" value="Ribosomal_bL36_sp"/>
</dbReference>
<dbReference type="NCBIfam" id="TIGR01022">
    <property type="entry name" value="rpmJ_bact"/>
    <property type="match status" value="1"/>
</dbReference>
<dbReference type="PANTHER" id="PTHR42888">
    <property type="entry name" value="50S RIBOSOMAL PROTEIN L36, CHLOROPLASTIC"/>
    <property type="match status" value="1"/>
</dbReference>
<dbReference type="PANTHER" id="PTHR42888:SF1">
    <property type="entry name" value="LARGE RIBOSOMAL SUBUNIT PROTEIN BL36C"/>
    <property type="match status" value="1"/>
</dbReference>
<dbReference type="Pfam" id="PF00444">
    <property type="entry name" value="Ribosomal_L36"/>
    <property type="match status" value="1"/>
</dbReference>
<dbReference type="SUPFAM" id="SSF57840">
    <property type="entry name" value="Ribosomal protein L36"/>
    <property type="match status" value="1"/>
</dbReference>
<dbReference type="PROSITE" id="PS00828">
    <property type="entry name" value="RIBOSOMAL_L36"/>
    <property type="match status" value="1"/>
</dbReference>